<sequence>MSTLEQKLTEMITAPVEALGFELVGIEFIRGRTSTLRIYIDSEDGINVDDCADVSHQVSAVLDVEDPITVAYNLEVSSPGLDRPLFTAEHYARFVGEEVTLVLRMAVQNRRKWQGVIKAVDGEMITVTVEGKDEVFALSNIQKANLVPHF</sequence>
<protein>
    <recommendedName>
        <fullName evidence="1">Ribosome maturation factor RimP</fullName>
    </recommendedName>
</protein>
<accession>Q0T0B1</accession>
<keyword id="KW-0963">Cytoplasm</keyword>
<keyword id="KW-0690">Ribosome biogenesis</keyword>
<reference key="1">
    <citation type="journal article" date="2006" name="BMC Genomics">
        <title>Complete genome sequence of Shigella flexneri 5b and comparison with Shigella flexneri 2a.</title>
        <authorList>
            <person name="Nie H."/>
            <person name="Yang F."/>
            <person name="Zhang X."/>
            <person name="Yang J."/>
            <person name="Chen L."/>
            <person name="Wang J."/>
            <person name="Xiong Z."/>
            <person name="Peng J."/>
            <person name="Sun L."/>
            <person name="Dong J."/>
            <person name="Xue Y."/>
            <person name="Xu X."/>
            <person name="Chen S."/>
            <person name="Yao Z."/>
            <person name="Shen Y."/>
            <person name="Jin Q."/>
        </authorList>
    </citation>
    <scope>NUCLEOTIDE SEQUENCE [LARGE SCALE GENOMIC DNA]</scope>
    <source>
        <strain>8401</strain>
    </source>
</reference>
<evidence type="ECO:0000255" key="1">
    <source>
        <dbReference type="HAMAP-Rule" id="MF_01077"/>
    </source>
</evidence>
<feature type="chain" id="PRO_0000384774" description="Ribosome maturation factor RimP">
    <location>
        <begin position="1"/>
        <end position="150"/>
    </location>
</feature>
<proteinExistence type="inferred from homology"/>
<comment type="function">
    <text evidence="1">Required for maturation of 30S ribosomal subunits.</text>
</comment>
<comment type="subcellular location">
    <subcellularLocation>
        <location evidence="1">Cytoplasm</location>
    </subcellularLocation>
</comment>
<comment type="similarity">
    <text evidence="1">Belongs to the RimP family.</text>
</comment>
<gene>
    <name evidence="1" type="primary">rimP</name>
    <name type="ordered locus">SFV_3200</name>
</gene>
<organism>
    <name type="scientific">Shigella flexneri serotype 5b (strain 8401)</name>
    <dbReference type="NCBI Taxonomy" id="373384"/>
    <lineage>
        <taxon>Bacteria</taxon>
        <taxon>Pseudomonadati</taxon>
        <taxon>Pseudomonadota</taxon>
        <taxon>Gammaproteobacteria</taxon>
        <taxon>Enterobacterales</taxon>
        <taxon>Enterobacteriaceae</taxon>
        <taxon>Shigella</taxon>
    </lineage>
</organism>
<dbReference type="EMBL" id="CP000266">
    <property type="protein sequence ID" value="ABF05254.1"/>
    <property type="molecule type" value="Genomic_DNA"/>
</dbReference>
<dbReference type="RefSeq" id="WP_001300397.1">
    <property type="nucleotide sequence ID" value="NC_008258.1"/>
</dbReference>
<dbReference type="SMR" id="Q0T0B1"/>
<dbReference type="GeneID" id="93778813"/>
<dbReference type="KEGG" id="sfv:SFV_3200"/>
<dbReference type="HOGENOM" id="CLU_070525_1_1_6"/>
<dbReference type="Proteomes" id="UP000000659">
    <property type="component" value="Chromosome"/>
</dbReference>
<dbReference type="GO" id="GO:0005829">
    <property type="term" value="C:cytosol"/>
    <property type="evidence" value="ECO:0007669"/>
    <property type="project" value="TreeGrafter"/>
</dbReference>
<dbReference type="GO" id="GO:0000028">
    <property type="term" value="P:ribosomal small subunit assembly"/>
    <property type="evidence" value="ECO:0007669"/>
    <property type="project" value="TreeGrafter"/>
</dbReference>
<dbReference type="GO" id="GO:0006412">
    <property type="term" value="P:translation"/>
    <property type="evidence" value="ECO:0007669"/>
    <property type="project" value="TreeGrafter"/>
</dbReference>
<dbReference type="CDD" id="cd01734">
    <property type="entry name" value="YlxS_C"/>
    <property type="match status" value="1"/>
</dbReference>
<dbReference type="FunFam" id="2.30.30.180:FF:000001">
    <property type="entry name" value="Ribosome maturation factor RimP"/>
    <property type="match status" value="1"/>
</dbReference>
<dbReference type="FunFam" id="3.30.300.70:FF:000001">
    <property type="entry name" value="Ribosome maturation factor RimP"/>
    <property type="match status" value="1"/>
</dbReference>
<dbReference type="Gene3D" id="2.30.30.180">
    <property type="entry name" value="Ribosome maturation factor RimP, C-terminal domain"/>
    <property type="match status" value="1"/>
</dbReference>
<dbReference type="Gene3D" id="3.30.300.70">
    <property type="entry name" value="RimP-like superfamily, N-terminal"/>
    <property type="match status" value="1"/>
</dbReference>
<dbReference type="HAMAP" id="MF_01077">
    <property type="entry name" value="RimP"/>
    <property type="match status" value="1"/>
</dbReference>
<dbReference type="InterPro" id="IPR003728">
    <property type="entry name" value="Ribosome_maturation_RimP"/>
</dbReference>
<dbReference type="InterPro" id="IPR028998">
    <property type="entry name" value="RimP_C"/>
</dbReference>
<dbReference type="InterPro" id="IPR036847">
    <property type="entry name" value="RimP_C_sf"/>
</dbReference>
<dbReference type="InterPro" id="IPR028989">
    <property type="entry name" value="RimP_N"/>
</dbReference>
<dbReference type="InterPro" id="IPR035956">
    <property type="entry name" value="RimP_N_sf"/>
</dbReference>
<dbReference type="NCBIfam" id="NF000927">
    <property type="entry name" value="PRK00092.1-1"/>
    <property type="match status" value="1"/>
</dbReference>
<dbReference type="PANTHER" id="PTHR33867">
    <property type="entry name" value="RIBOSOME MATURATION FACTOR RIMP"/>
    <property type="match status" value="1"/>
</dbReference>
<dbReference type="PANTHER" id="PTHR33867:SF1">
    <property type="entry name" value="RIBOSOME MATURATION FACTOR RIMP"/>
    <property type="match status" value="1"/>
</dbReference>
<dbReference type="Pfam" id="PF17384">
    <property type="entry name" value="DUF150_C"/>
    <property type="match status" value="1"/>
</dbReference>
<dbReference type="Pfam" id="PF02576">
    <property type="entry name" value="RimP_N"/>
    <property type="match status" value="1"/>
</dbReference>
<dbReference type="SUPFAM" id="SSF74942">
    <property type="entry name" value="YhbC-like, C-terminal domain"/>
    <property type="match status" value="1"/>
</dbReference>
<dbReference type="SUPFAM" id="SSF75420">
    <property type="entry name" value="YhbC-like, N-terminal domain"/>
    <property type="match status" value="1"/>
</dbReference>
<name>RIMP_SHIF8</name>